<proteinExistence type="inferred from homology"/>
<gene>
    <name evidence="1" type="primary">tal</name>
    <name type="ordered locus">MGAS9429_Spy1374</name>
</gene>
<protein>
    <recommendedName>
        <fullName evidence="1">Probable transaldolase</fullName>
        <ecNumber evidence="1">2.2.1.2</ecNumber>
    </recommendedName>
</protein>
<reference key="1">
    <citation type="journal article" date="2006" name="Proc. Natl. Acad. Sci. U.S.A.">
        <title>Molecular genetic anatomy of inter- and intraserotype variation in the human bacterial pathogen group A Streptococcus.</title>
        <authorList>
            <person name="Beres S.B."/>
            <person name="Richter E.W."/>
            <person name="Nagiec M.J."/>
            <person name="Sumby P."/>
            <person name="Porcella S.F."/>
            <person name="DeLeo F.R."/>
            <person name="Musser J.M."/>
        </authorList>
    </citation>
    <scope>NUCLEOTIDE SEQUENCE [LARGE SCALE GENOMIC DNA]</scope>
    <source>
        <strain>MGAS9429</strain>
    </source>
</reference>
<sequence length="214" mass="23272">MKFFLDTANVAAIKAINELGVVDGVTTNPTIISREGRDFETVIKEICDIVDGPISAEVTGLTADAMVEEARSIAKWHDNVVVKIPMTTEGLKATNILSKEGIKTNVTLIFTVSQGLMAMKAGATYISPFIGRLEDIGTDAYQLISDLREIIDLYDFQAEIIAASIRTTAHVEAVAKLGAHIATIPDPLFAKMTQHPLTTNGLKTFMEDWASFKK</sequence>
<dbReference type="EC" id="2.2.1.2" evidence="1"/>
<dbReference type="EMBL" id="CP000259">
    <property type="protein sequence ID" value="ABF32561.1"/>
    <property type="molecule type" value="Genomic_DNA"/>
</dbReference>
<dbReference type="SMR" id="Q1JKK8"/>
<dbReference type="KEGG" id="spk:MGAS9429_Spy1374"/>
<dbReference type="HOGENOM" id="CLU_079764_0_0_9"/>
<dbReference type="UniPathway" id="UPA00115">
    <property type="reaction ID" value="UER00414"/>
</dbReference>
<dbReference type="Proteomes" id="UP000002433">
    <property type="component" value="Chromosome"/>
</dbReference>
<dbReference type="GO" id="GO:0005737">
    <property type="term" value="C:cytoplasm"/>
    <property type="evidence" value="ECO:0007669"/>
    <property type="project" value="UniProtKB-SubCell"/>
</dbReference>
<dbReference type="GO" id="GO:0016832">
    <property type="term" value="F:aldehyde-lyase activity"/>
    <property type="evidence" value="ECO:0007669"/>
    <property type="project" value="InterPro"/>
</dbReference>
<dbReference type="GO" id="GO:0004801">
    <property type="term" value="F:transaldolase activity"/>
    <property type="evidence" value="ECO:0007669"/>
    <property type="project" value="UniProtKB-UniRule"/>
</dbReference>
<dbReference type="GO" id="GO:0005975">
    <property type="term" value="P:carbohydrate metabolic process"/>
    <property type="evidence" value="ECO:0007669"/>
    <property type="project" value="InterPro"/>
</dbReference>
<dbReference type="GO" id="GO:0006098">
    <property type="term" value="P:pentose-phosphate shunt"/>
    <property type="evidence" value="ECO:0007669"/>
    <property type="project" value="UniProtKB-UniRule"/>
</dbReference>
<dbReference type="CDD" id="cd00956">
    <property type="entry name" value="Transaldolase_FSA"/>
    <property type="match status" value="1"/>
</dbReference>
<dbReference type="FunFam" id="3.20.20.70:FF:000018">
    <property type="entry name" value="Probable transaldolase"/>
    <property type="match status" value="1"/>
</dbReference>
<dbReference type="Gene3D" id="3.20.20.70">
    <property type="entry name" value="Aldolase class I"/>
    <property type="match status" value="1"/>
</dbReference>
<dbReference type="HAMAP" id="MF_00494">
    <property type="entry name" value="Transaldolase_3b"/>
    <property type="match status" value="1"/>
</dbReference>
<dbReference type="InterPro" id="IPR013785">
    <property type="entry name" value="Aldolase_TIM"/>
</dbReference>
<dbReference type="InterPro" id="IPR001585">
    <property type="entry name" value="TAL/FSA"/>
</dbReference>
<dbReference type="InterPro" id="IPR022999">
    <property type="entry name" value="Transaldolase_3B"/>
</dbReference>
<dbReference type="InterPro" id="IPR004731">
    <property type="entry name" value="Transaldolase_3B/F6P_aldolase"/>
</dbReference>
<dbReference type="InterPro" id="IPR018225">
    <property type="entry name" value="Transaldolase_AS"/>
</dbReference>
<dbReference type="InterPro" id="IPR033919">
    <property type="entry name" value="TSA/FSA_arc/bac"/>
</dbReference>
<dbReference type="NCBIfam" id="TIGR00875">
    <property type="entry name" value="fsa_talC_mipB"/>
    <property type="match status" value="1"/>
</dbReference>
<dbReference type="PANTHER" id="PTHR10683">
    <property type="entry name" value="TRANSALDOLASE"/>
    <property type="match status" value="1"/>
</dbReference>
<dbReference type="PANTHER" id="PTHR10683:SF36">
    <property type="entry name" value="TRANSALDOLASE"/>
    <property type="match status" value="1"/>
</dbReference>
<dbReference type="Pfam" id="PF00923">
    <property type="entry name" value="TAL_FSA"/>
    <property type="match status" value="1"/>
</dbReference>
<dbReference type="SUPFAM" id="SSF51569">
    <property type="entry name" value="Aldolase"/>
    <property type="match status" value="1"/>
</dbReference>
<dbReference type="PROSITE" id="PS01054">
    <property type="entry name" value="TRANSALDOLASE_1"/>
    <property type="match status" value="1"/>
</dbReference>
<dbReference type="PROSITE" id="PS00958">
    <property type="entry name" value="TRANSALDOLASE_2"/>
    <property type="match status" value="1"/>
</dbReference>
<evidence type="ECO:0000255" key="1">
    <source>
        <dbReference type="HAMAP-Rule" id="MF_00494"/>
    </source>
</evidence>
<name>TAL_STRPC</name>
<comment type="function">
    <text evidence="1">Transaldolase is important for the balance of metabolites in the pentose-phosphate pathway.</text>
</comment>
<comment type="catalytic activity">
    <reaction evidence="1">
        <text>D-sedoheptulose 7-phosphate + D-glyceraldehyde 3-phosphate = D-erythrose 4-phosphate + beta-D-fructose 6-phosphate</text>
        <dbReference type="Rhea" id="RHEA:17053"/>
        <dbReference type="ChEBI" id="CHEBI:16897"/>
        <dbReference type="ChEBI" id="CHEBI:57483"/>
        <dbReference type="ChEBI" id="CHEBI:57634"/>
        <dbReference type="ChEBI" id="CHEBI:59776"/>
        <dbReference type="EC" id="2.2.1.2"/>
    </reaction>
</comment>
<comment type="pathway">
    <text evidence="1">Carbohydrate degradation; pentose phosphate pathway; D-glyceraldehyde 3-phosphate and beta-D-fructose 6-phosphate from D-ribose 5-phosphate and D-xylulose 5-phosphate (non-oxidative stage): step 2/3.</text>
</comment>
<comment type="subcellular location">
    <subcellularLocation>
        <location evidence="1">Cytoplasm</location>
    </subcellularLocation>
</comment>
<comment type="similarity">
    <text evidence="1">Belongs to the transaldolase family. Type 3B subfamily.</text>
</comment>
<organism>
    <name type="scientific">Streptococcus pyogenes serotype M12 (strain MGAS9429)</name>
    <dbReference type="NCBI Taxonomy" id="370551"/>
    <lineage>
        <taxon>Bacteria</taxon>
        <taxon>Bacillati</taxon>
        <taxon>Bacillota</taxon>
        <taxon>Bacilli</taxon>
        <taxon>Lactobacillales</taxon>
        <taxon>Streptococcaceae</taxon>
        <taxon>Streptococcus</taxon>
    </lineage>
</organism>
<feature type="chain" id="PRO_1000060478" description="Probable transaldolase">
    <location>
        <begin position="1"/>
        <end position="214"/>
    </location>
</feature>
<feature type="active site" description="Schiff-base intermediate with substrate" evidence="1">
    <location>
        <position position="83"/>
    </location>
</feature>
<keyword id="KW-0963">Cytoplasm</keyword>
<keyword id="KW-0570">Pentose shunt</keyword>
<keyword id="KW-0704">Schiff base</keyword>
<keyword id="KW-0808">Transferase</keyword>
<accession>Q1JKK8</accession>